<evidence type="ECO:0000250" key="1"/>
<evidence type="ECO:0000255" key="2">
    <source>
        <dbReference type="HAMAP-Rule" id="MF_00100"/>
    </source>
</evidence>
<evidence type="ECO:0000256" key="3">
    <source>
        <dbReference type="SAM" id="MobiDB-lite"/>
    </source>
</evidence>
<proteinExistence type="inferred from homology"/>
<protein>
    <recommendedName>
        <fullName evidence="2">Translation initiation factor IF-2</fullName>
    </recommendedName>
</protein>
<comment type="function">
    <text evidence="2">One of the essential components for the initiation of protein synthesis. Protects formylmethionyl-tRNA from spontaneous hydrolysis and promotes its binding to the 30S ribosomal subunits. Also involved in the hydrolysis of GTP during the formation of the 70S ribosomal complex.</text>
</comment>
<comment type="subcellular location">
    <subcellularLocation>
        <location evidence="2">Cytoplasm</location>
    </subcellularLocation>
</comment>
<comment type="similarity">
    <text evidence="2">Belongs to the TRAFAC class translation factor GTPase superfamily. Classic translation factor GTPase family. IF-2 subfamily.</text>
</comment>
<accession>A8A4Y4</accession>
<name>IF2_ECOHS</name>
<dbReference type="EMBL" id="CP000802">
    <property type="protein sequence ID" value="ABV07588.1"/>
    <property type="molecule type" value="Genomic_DNA"/>
</dbReference>
<dbReference type="RefSeq" id="WP_000133044.1">
    <property type="nucleotide sequence ID" value="NC_009800.1"/>
</dbReference>
<dbReference type="BMRB" id="A8A4Y4"/>
<dbReference type="SMR" id="A8A4Y4"/>
<dbReference type="GeneID" id="75206024"/>
<dbReference type="KEGG" id="ecx:EcHS_A3360"/>
<dbReference type="HOGENOM" id="CLU_006301_6_3_6"/>
<dbReference type="GO" id="GO:0005829">
    <property type="term" value="C:cytosol"/>
    <property type="evidence" value="ECO:0007669"/>
    <property type="project" value="TreeGrafter"/>
</dbReference>
<dbReference type="GO" id="GO:0005525">
    <property type="term" value="F:GTP binding"/>
    <property type="evidence" value="ECO:0007669"/>
    <property type="project" value="UniProtKB-KW"/>
</dbReference>
<dbReference type="GO" id="GO:0003924">
    <property type="term" value="F:GTPase activity"/>
    <property type="evidence" value="ECO:0007669"/>
    <property type="project" value="UniProtKB-UniRule"/>
</dbReference>
<dbReference type="GO" id="GO:0097216">
    <property type="term" value="F:guanosine tetraphosphate binding"/>
    <property type="evidence" value="ECO:0007669"/>
    <property type="project" value="UniProtKB-ARBA"/>
</dbReference>
<dbReference type="GO" id="GO:0003743">
    <property type="term" value="F:translation initiation factor activity"/>
    <property type="evidence" value="ECO:0007669"/>
    <property type="project" value="UniProtKB-UniRule"/>
</dbReference>
<dbReference type="CDD" id="cd01887">
    <property type="entry name" value="IF2_eIF5B"/>
    <property type="match status" value="1"/>
</dbReference>
<dbReference type="CDD" id="cd03702">
    <property type="entry name" value="IF2_mtIF2_II"/>
    <property type="match status" value="1"/>
</dbReference>
<dbReference type="CDD" id="cd03692">
    <property type="entry name" value="mtIF2_IVc"/>
    <property type="match status" value="1"/>
</dbReference>
<dbReference type="FunFam" id="2.40.30.10:FF:000007">
    <property type="entry name" value="Translation initiation factor IF-2"/>
    <property type="match status" value="1"/>
</dbReference>
<dbReference type="FunFam" id="2.40.30.10:FF:000008">
    <property type="entry name" value="Translation initiation factor IF-2"/>
    <property type="match status" value="1"/>
</dbReference>
<dbReference type="FunFam" id="3.30.56.50:FF:000001">
    <property type="entry name" value="Translation initiation factor IF-2"/>
    <property type="match status" value="1"/>
</dbReference>
<dbReference type="FunFam" id="3.40.50.10050:FF:000001">
    <property type="entry name" value="Translation initiation factor IF-2"/>
    <property type="match status" value="1"/>
</dbReference>
<dbReference type="FunFam" id="3.40.50.300:FF:000019">
    <property type="entry name" value="Translation initiation factor IF-2"/>
    <property type="match status" value="1"/>
</dbReference>
<dbReference type="Gene3D" id="3.40.50.300">
    <property type="entry name" value="P-loop containing nucleotide triphosphate hydrolases"/>
    <property type="match status" value="1"/>
</dbReference>
<dbReference type="Gene3D" id="3.30.56.50">
    <property type="entry name" value="Putative DNA-binding domain, N-terminal subdomain of bacterial translation initiation factor IF2"/>
    <property type="match status" value="1"/>
</dbReference>
<dbReference type="Gene3D" id="2.40.30.10">
    <property type="entry name" value="Translation factors"/>
    <property type="match status" value="2"/>
</dbReference>
<dbReference type="Gene3D" id="3.40.50.10050">
    <property type="entry name" value="Translation initiation factor IF- 2, domain 3"/>
    <property type="match status" value="1"/>
</dbReference>
<dbReference type="HAMAP" id="MF_00100_B">
    <property type="entry name" value="IF_2_B"/>
    <property type="match status" value="1"/>
</dbReference>
<dbReference type="InterPro" id="IPR009061">
    <property type="entry name" value="DNA-bd_dom_put_sf"/>
</dbReference>
<dbReference type="InterPro" id="IPR053905">
    <property type="entry name" value="EF-G-like_DII"/>
</dbReference>
<dbReference type="InterPro" id="IPR004161">
    <property type="entry name" value="EFTu-like_2"/>
</dbReference>
<dbReference type="InterPro" id="IPR013575">
    <property type="entry name" value="IF2_assoc_dom_bac"/>
</dbReference>
<dbReference type="InterPro" id="IPR044145">
    <property type="entry name" value="IF2_II"/>
</dbReference>
<dbReference type="InterPro" id="IPR006847">
    <property type="entry name" value="IF2_N"/>
</dbReference>
<dbReference type="InterPro" id="IPR027417">
    <property type="entry name" value="P-loop_NTPase"/>
</dbReference>
<dbReference type="InterPro" id="IPR005225">
    <property type="entry name" value="Small_GTP-bd"/>
</dbReference>
<dbReference type="InterPro" id="IPR000795">
    <property type="entry name" value="T_Tr_GTP-bd_dom"/>
</dbReference>
<dbReference type="InterPro" id="IPR000178">
    <property type="entry name" value="TF_IF2_bacterial-like"/>
</dbReference>
<dbReference type="InterPro" id="IPR015760">
    <property type="entry name" value="TIF_IF2"/>
</dbReference>
<dbReference type="InterPro" id="IPR023115">
    <property type="entry name" value="TIF_IF2_dom3"/>
</dbReference>
<dbReference type="InterPro" id="IPR036925">
    <property type="entry name" value="TIF_IF2_dom3_sf"/>
</dbReference>
<dbReference type="InterPro" id="IPR009000">
    <property type="entry name" value="Transl_B-barrel_sf"/>
</dbReference>
<dbReference type="NCBIfam" id="TIGR00487">
    <property type="entry name" value="IF-2"/>
    <property type="match status" value="1"/>
</dbReference>
<dbReference type="NCBIfam" id="TIGR00231">
    <property type="entry name" value="small_GTP"/>
    <property type="match status" value="1"/>
</dbReference>
<dbReference type="PANTHER" id="PTHR43381:SF5">
    <property type="entry name" value="TR-TYPE G DOMAIN-CONTAINING PROTEIN"/>
    <property type="match status" value="1"/>
</dbReference>
<dbReference type="PANTHER" id="PTHR43381">
    <property type="entry name" value="TRANSLATION INITIATION FACTOR IF-2-RELATED"/>
    <property type="match status" value="1"/>
</dbReference>
<dbReference type="Pfam" id="PF22042">
    <property type="entry name" value="EF-G_D2"/>
    <property type="match status" value="1"/>
</dbReference>
<dbReference type="Pfam" id="PF00009">
    <property type="entry name" value="GTP_EFTU"/>
    <property type="match status" value="1"/>
</dbReference>
<dbReference type="Pfam" id="PF03144">
    <property type="entry name" value="GTP_EFTU_D2"/>
    <property type="match status" value="1"/>
</dbReference>
<dbReference type="Pfam" id="PF11987">
    <property type="entry name" value="IF-2"/>
    <property type="match status" value="1"/>
</dbReference>
<dbReference type="Pfam" id="PF08364">
    <property type="entry name" value="IF2_assoc"/>
    <property type="match status" value="1"/>
</dbReference>
<dbReference type="Pfam" id="PF04760">
    <property type="entry name" value="IF2_N"/>
    <property type="match status" value="2"/>
</dbReference>
<dbReference type="SUPFAM" id="SSF52156">
    <property type="entry name" value="Initiation factor IF2/eIF5b, domain 3"/>
    <property type="match status" value="1"/>
</dbReference>
<dbReference type="SUPFAM" id="SSF52540">
    <property type="entry name" value="P-loop containing nucleoside triphosphate hydrolases"/>
    <property type="match status" value="1"/>
</dbReference>
<dbReference type="SUPFAM" id="SSF46955">
    <property type="entry name" value="Putative DNA-binding domain"/>
    <property type="match status" value="1"/>
</dbReference>
<dbReference type="SUPFAM" id="SSF50447">
    <property type="entry name" value="Translation proteins"/>
    <property type="match status" value="2"/>
</dbReference>
<dbReference type="PROSITE" id="PS51722">
    <property type="entry name" value="G_TR_2"/>
    <property type="match status" value="1"/>
</dbReference>
<dbReference type="PROSITE" id="PS01176">
    <property type="entry name" value="IF2"/>
    <property type="match status" value="1"/>
</dbReference>
<gene>
    <name evidence="2" type="primary">infB</name>
    <name type="ordered locus">EcHS_A3360</name>
</gene>
<reference key="1">
    <citation type="journal article" date="2008" name="J. Bacteriol.">
        <title>The pangenome structure of Escherichia coli: comparative genomic analysis of E. coli commensal and pathogenic isolates.</title>
        <authorList>
            <person name="Rasko D.A."/>
            <person name="Rosovitz M.J."/>
            <person name="Myers G.S.A."/>
            <person name="Mongodin E.F."/>
            <person name="Fricke W.F."/>
            <person name="Gajer P."/>
            <person name="Crabtree J."/>
            <person name="Sebaihia M."/>
            <person name="Thomson N.R."/>
            <person name="Chaudhuri R."/>
            <person name="Henderson I.R."/>
            <person name="Sperandio V."/>
            <person name="Ravel J."/>
        </authorList>
    </citation>
    <scope>NUCLEOTIDE SEQUENCE [LARGE SCALE GENOMIC DNA]</scope>
    <source>
        <strain>HS</strain>
    </source>
</reference>
<keyword id="KW-0007">Acetylation</keyword>
<keyword id="KW-0963">Cytoplasm</keyword>
<keyword id="KW-0342">GTP-binding</keyword>
<keyword id="KW-0396">Initiation factor</keyword>
<keyword id="KW-0547">Nucleotide-binding</keyword>
<keyword id="KW-0648">Protein biosynthesis</keyword>
<feature type="chain" id="PRO_1000057655" description="Translation initiation factor IF-2">
    <location>
        <begin position="1"/>
        <end position="890"/>
    </location>
</feature>
<feature type="domain" description="tr-type G">
    <location>
        <begin position="389"/>
        <end position="558"/>
    </location>
</feature>
<feature type="region of interest" description="Disordered" evidence="3">
    <location>
        <begin position="45"/>
        <end position="304"/>
    </location>
</feature>
<feature type="region of interest" description="G1" evidence="1">
    <location>
        <begin position="398"/>
        <end position="405"/>
    </location>
</feature>
<feature type="region of interest" description="G2" evidence="1">
    <location>
        <begin position="423"/>
        <end position="427"/>
    </location>
</feature>
<feature type="region of interest" description="G3" evidence="1">
    <location>
        <begin position="444"/>
        <end position="447"/>
    </location>
</feature>
<feature type="region of interest" description="G4" evidence="1">
    <location>
        <begin position="498"/>
        <end position="501"/>
    </location>
</feature>
<feature type="region of interest" description="G5" evidence="1">
    <location>
        <begin position="534"/>
        <end position="536"/>
    </location>
</feature>
<feature type="compositionally biased region" description="Polar residues" evidence="3">
    <location>
        <begin position="67"/>
        <end position="81"/>
    </location>
</feature>
<feature type="compositionally biased region" description="Basic and acidic residues" evidence="3">
    <location>
        <begin position="92"/>
        <end position="217"/>
    </location>
</feature>
<feature type="compositionally biased region" description="Basic residues" evidence="3">
    <location>
        <begin position="252"/>
        <end position="266"/>
    </location>
</feature>
<feature type="compositionally biased region" description="Basic and acidic residues" evidence="3">
    <location>
        <begin position="267"/>
        <end position="280"/>
    </location>
</feature>
<feature type="binding site" evidence="2">
    <location>
        <begin position="398"/>
        <end position="405"/>
    </location>
    <ligand>
        <name>GTP</name>
        <dbReference type="ChEBI" id="CHEBI:37565"/>
    </ligand>
</feature>
<feature type="binding site" evidence="2">
    <location>
        <begin position="444"/>
        <end position="448"/>
    </location>
    <ligand>
        <name>GTP</name>
        <dbReference type="ChEBI" id="CHEBI:37565"/>
    </ligand>
</feature>
<feature type="binding site" evidence="2">
    <location>
        <begin position="498"/>
        <end position="501"/>
    </location>
    <ligand>
        <name>GTP</name>
        <dbReference type="ChEBI" id="CHEBI:37565"/>
    </ligand>
</feature>
<feature type="modified residue" description="N6-acetyllysine" evidence="1">
    <location>
        <position position="808"/>
    </location>
</feature>
<sequence>MTDVTIKTLAAERQTSVERLVQQFADAGIRKSADDSVSAQEKQTLIDHLNQKNSGPDKLTLQRKTRSTLNIPGTGGKSKSVQIEVRKKRTFVKRDPQEAERLAAEEQAQREAEEQARREAEESAKREAQQKAEREAAEQAKREAAEQAKREAAEKDKVSNQQDDMTKNAQAEKARREQEAAELKRKAEEEARRKLEEEARRVAEEARRMAEENKWTDNAEPTEDSSDYHVTTSQHARQAEDESDREVEGGRGRGRNAKAARPKKGNKHAESKADREEARAAVRGGKGGKRKGSSLQQGFQKPAQAVNRDVVIGETITVGELANKMAVKGSQVIKAMMKLGAMATINQVIDQETAQLVAEEMGHKVILRRENELEEAVMSDRDTGAAAEPRAPVVTIMGHVDHGKTSLLDYIRSTKVASGEAGGITQHIGAYHVETENGMITFLDTPGHAAFTSMRARGAQATDIVVLVVAADDGVMPQTIEAIQHAKAAQVPVVVAVNKIDKPEADPDRVKNELSQYGILPEEWGGESQFVHVSAKAGTGIDELLDAILLQAEVLELKAVRKGMASGAVIESFLDKGRGPVATVLVREGTLHKGDIVLCGFEYGRVRAMRNELGQEVLEAGPSIPVEILGLSGVPAAGDEVTVVRDEKKAREVALYRQGKFREVKLARQQKSKLENMFANMTEGEVHEVNIVLKADVQGSVEAISDSLLKLSTDEVKVKIIGSGVGGITETDATLAAASNAILVGFNVRADASARKVIEAESLDLRYYSVIYNLIDEVKAAMSGMLSPELKQQIIGLAEVRDVFKSPKFGAIAGCMVTEGVVKRHNPIRVLRDNVVIYEGELESLRRFKDDVNEVRNGMECGIGVKNYNDVRTGDVIEVFEIIEIQRTIA</sequence>
<organism>
    <name type="scientific">Escherichia coli O9:H4 (strain HS)</name>
    <dbReference type="NCBI Taxonomy" id="331112"/>
    <lineage>
        <taxon>Bacteria</taxon>
        <taxon>Pseudomonadati</taxon>
        <taxon>Pseudomonadota</taxon>
        <taxon>Gammaproteobacteria</taxon>
        <taxon>Enterobacterales</taxon>
        <taxon>Enterobacteriaceae</taxon>
        <taxon>Escherichia</taxon>
    </lineage>
</organism>